<gene>
    <name type="ordered locus">Franean1_2060</name>
</gene>
<sequence>MTAATLDLAIITGLSGAGRSTAAKCLEDLGWFVVDNLPPALLSTMAELGHRSGGAVSRIAVVVDVRGRAFFSDLRAAVEALDSRGMHPRMLFLEASDDALVRRFDHVRRPHPLQGDERVVDGINRERTLLAELRGEADLVLDTTDLNVHELRAKIDAAFGQPRANRLNATVISFGYKYGLPLDADLVADCRFLPNPHWVEALRPYTGRDSQVRDYVLAQPGATEFVDQYTALLRLVGEGYVREGKRYLTLAVGCTGGKHRSVAVAEQLGARLAADGVGVRVVHRDLGRE</sequence>
<evidence type="ECO:0000255" key="1">
    <source>
        <dbReference type="HAMAP-Rule" id="MF_00636"/>
    </source>
</evidence>
<protein>
    <recommendedName>
        <fullName evidence="1">Nucleotide-binding protein Franean1_2060</fullName>
    </recommendedName>
</protein>
<dbReference type="EMBL" id="CP000820">
    <property type="protein sequence ID" value="ABW11497.1"/>
    <property type="molecule type" value="Genomic_DNA"/>
</dbReference>
<dbReference type="RefSeq" id="WP_020459664.1">
    <property type="nucleotide sequence ID" value="NC_009921.1"/>
</dbReference>
<dbReference type="SMR" id="A8KYR1"/>
<dbReference type="STRING" id="298653.Franean1_2060"/>
<dbReference type="KEGG" id="fre:Franean1_2060"/>
<dbReference type="eggNOG" id="COG1660">
    <property type="taxonomic scope" value="Bacteria"/>
</dbReference>
<dbReference type="HOGENOM" id="CLU_059558_0_0_11"/>
<dbReference type="GO" id="GO:0005524">
    <property type="term" value="F:ATP binding"/>
    <property type="evidence" value="ECO:0007669"/>
    <property type="project" value="UniProtKB-UniRule"/>
</dbReference>
<dbReference type="GO" id="GO:0005525">
    <property type="term" value="F:GTP binding"/>
    <property type="evidence" value="ECO:0007669"/>
    <property type="project" value="UniProtKB-UniRule"/>
</dbReference>
<dbReference type="HAMAP" id="MF_00636">
    <property type="entry name" value="RapZ_like"/>
    <property type="match status" value="1"/>
</dbReference>
<dbReference type="InterPro" id="IPR027417">
    <property type="entry name" value="P-loop_NTPase"/>
</dbReference>
<dbReference type="InterPro" id="IPR005337">
    <property type="entry name" value="RapZ-like"/>
</dbReference>
<dbReference type="InterPro" id="IPR053930">
    <property type="entry name" value="RapZ-like_N"/>
</dbReference>
<dbReference type="InterPro" id="IPR053931">
    <property type="entry name" value="RapZ_C"/>
</dbReference>
<dbReference type="NCBIfam" id="NF003828">
    <property type="entry name" value="PRK05416.1"/>
    <property type="match status" value="1"/>
</dbReference>
<dbReference type="PANTHER" id="PTHR30448">
    <property type="entry name" value="RNASE ADAPTER PROTEIN RAPZ"/>
    <property type="match status" value="1"/>
</dbReference>
<dbReference type="PANTHER" id="PTHR30448:SF0">
    <property type="entry name" value="RNASE ADAPTER PROTEIN RAPZ"/>
    <property type="match status" value="1"/>
</dbReference>
<dbReference type="Pfam" id="PF22740">
    <property type="entry name" value="PapZ_C"/>
    <property type="match status" value="1"/>
</dbReference>
<dbReference type="Pfam" id="PF03668">
    <property type="entry name" value="RapZ-like_N"/>
    <property type="match status" value="1"/>
</dbReference>
<dbReference type="PIRSF" id="PIRSF005052">
    <property type="entry name" value="P-loopkin"/>
    <property type="match status" value="1"/>
</dbReference>
<dbReference type="SUPFAM" id="SSF52540">
    <property type="entry name" value="P-loop containing nucleoside triphosphate hydrolases"/>
    <property type="match status" value="1"/>
</dbReference>
<keyword id="KW-0067">ATP-binding</keyword>
<keyword id="KW-0342">GTP-binding</keyword>
<keyword id="KW-0547">Nucleotide-binding</keyword>
<organism>
    <name type="scientific">Parafrankia sp. (strain EAN1pec)</name>
    <dbReference type="NCBI Taxonomy" id="298653"/>
    <lineage>
        <taxon>Bacteria</taxon>
        <taxon>Bacillati</taxon>
        <taxon>Actinomycetota</taxon>
        <taxon>Actinomycetes</taxon>
        <taxon>Frankiales</taxon>
        <taxon>Frankiaceae</taxon>
        <taxon>Parafrankia</taxon>
    </lineage>
</organism>
<proteinExistence type="inferred from homology"/>
<feature type="chain" id="PRO_1000130760" description="Nucleotide-binding protein Franean1_2060">
    <location>
        <begin position="1"/>
        <end position="289"/>
    </location>
</feature>
<feature type="binding site" evidence="1">
    <location>
        <begin position="13"/>
        <end position="20"/>
    </location>
    <ligand>
        <name>ATP</name>
        <dbReference type="ChEBI" id="CHEBI:30616"/>
    </ligand>
</feature>
<feature type="binding site" evidence="1">
    <location>
        <begin position="64"/>
        <end position="67"/>
    </location>
    <ligand>
        <name>GTP</name>
        <dbReference type="ChEBI" id="CHEBI:37565"/>
    </ligand>
</feature>
<name>Y2060_PARS2</name>
<comment type="function">
    <text evidence="1">Displays ATPase and GTPase activities.</text>
</comment>
<comment type="similarity">
    <text evidence="1">Belongs to the RapZ-like family.</text>
</comment>
<accession>A8KYR1</accession>
<reference key="1">
    <citation type="journal article" date="2007" name="Genome Res.">
        <title>Genome characteristics of facultatively symbiotic Frankia sp. strains reflect host range and host plant biogeography.</title>
        <authorList>
            <person name="Normand P."/>
            <person name="Lapierre P."/>
            <person name="Tisa L.S."/>
            <person name="Gogarten J.P."/>
            <person name="Alloisio N."/>
            <person name="Bagnarol E."/>
            <person name="Bassi C.A."/>
            <person name="Berry A.M."/>
            <person name="Bickhart D.M."/>
            <person name="Choisne N."/>
            <person name="Couloux A."/>
            <person name="Cournoyer B."/>
            <person name="Cruveiller S."/>
            <person name="Daubin V."/>
            <person name="Demange N."/>
            <person name="Francino M.P."/>
            <person name="Goltsman E."/>
            <person name="Huang Y."/>
            <person name="Kopp O.R."/>
            <person name="Labarre L."/>
            <person name="Lapidus A."/>
            <person name="Lavire C."/>
            <person name="Marechal J."/>
            <person name="Martinez M."/>
            <person name="Mastronunzio J.E."/>
            <person name="Mullin B.C."/>
            <person name="Niemann J."/>
            <person name="Pujic P."/>
            <person name="Rawnsley T."/>
            <person name="Rouy Z."/>
            <person name="Schenowitz C."/>
            <person name="Sellstedt A."/>
            <person name="Tavares F."/>
            <person name="Tomkins J.P."/>
            <person name="Vallenet D."/>
            <person name="Valverde C."/>
            <person name="Wall L.G."/>
            <person name="Wang Y."/>
            <person name="Medigue C."/>
            <person name="Benson D.R."/>
        </authorList>
    </citation>
    <scope>NUCLEOTIDE SEQUENCE [LARGE SCALE GENOMIC DNA]</scope>
    <source>
        <strain>EAN1pec</strain>
    </source>
</reference>